<sequence length="138" mass="15106">MAGLQRSTISFRRQGSSGIVWDDRLIAELSQQAANDRKGETLQQDEQAKLITSEVQDQTTKPIAGEGLKPIRTDGGMERSRSNGGGAIRHHRNTGRVSPAVDPPSPRLSAFGCCSAFGKKQPGKKVNQRKRPAKRRSR</sequence>
<proteinExistence type="evidence at protein level"/>
<protein>
    <recommendedName>
        <fullName>MAPK kinase substrate protein At1g80180</fullName>
    </recommendedName>
</protein>
<comment type="function">
    <text evidence="3">May play a role in the regulation of stomata patterning.</text>
</comment>
<comment type="tissue specificity">
    <text evidence="2">Expressed in developing cotyledons, mature cotyledons, cotyledon epidermis and stomata.</text>
</comment>
<reference key="1">
    <citation type="journal article" date="2000" name="Nature">
        <title>Sequence and analysis of chromosome 1 of the plant Arabidopsis thaliana.</title>
        <authorList>
            <person name="Theologis A."/>
            <person name="Ecker J.R."/>
            <person name="Palm C.J."/>
            <person name="Federspiel N.A."/>
            <person name="Kaul S."/>
            <person name="White O."/>
            <person name="Alonso J."/>
            <person name="Altafi H."/>
            <person name="Araujo R."/>
            <person name="Bowman C.L."/>
            <person name="Brooks S.Y."/>
            <person name="Buehler E."/>
            <person name="Chan A."/>
            <person name="Chao Q."/>
            <person name="Chen H."/>
            <person name="Cheuk R.F."/>
            <person name="Chin C.W."/>
            <person name="Chung M.K."/>
            <person name="Conn L."/>
            <person name="Conway A.B."/>
            <person name="Conway A.R."/>
            <person name="Creasy T.H."/>
            <person name="Dewar K."/>
            <person name="Dunn P."/>
            <person name="Etgu P."/>
            <person name="Feldblyum T.V."/>
            <person name="Feng J.-D."/>
            <person name="Fong B."/>
            <person name="Fujii C.Y."/>
            <person name="Gill J.E."/>
            <person name="Goldsmith A.D."/>
            <person name="Haas B."/>
            <person name="Hansen N.F."/>
            <person name="Hughes B."/>
            <person name="Huizar L."/>
            <person name="Hunter J.L."/>
            <person name="Jenkins J."/>
            <person name="Johnson-Hopson C."/>
            <person name="Khan S."/>
            <person name="Khaykin E."/>
            <person name="Kim C.J."/>
            <person name="Koo H.L."/>
            <person name="Kremenetskaia I."/>
            <person name="Kurtz D.B."/>
            <person name="Kwan A."/>
            <person name="Lam B."/>
            <person name="Langin-Hooper S."/>
            <person name="Lee A."/>
            <person name="Lee J.M."/>
            <person name="Lenz C.A."/>
            <person name="Li J.H."/>
            <person name="Li Y.-P."/>
            <person name="Lin X."/>
            <person name="Liu S.X."/>
            <person name="Liu Z.A."/>
            <person name="Luros J.S."/>
            <person name="Maiti R."/>
            <person name="Marziali A."/>
            <person name="Militscher J."/>
            <person name="Miranda M."/>
            <person name="Nguyen M."/>
            <person name="Nierman W.C."/>
            <person name="Osborne B.I."/>
            <person name="Pai G."/>
            <person name="Peterson J."/>
            <person name="Pham P.K."/>
            <person name="Rizzo M."/>
            <person name="Rooney T."/>
            <person name="Rowley D."/>
            <person name="Sakano H."/>
            <person name="Salzberg S.L."/>
            <person name="Schwartz J.R."/>
            <person name="Shinn P."/>
            <person name="Southwick A.M."/>
            <person name="Sun H."/>
            <person name="Tallon L.J."/>
            <person name="Tambunga G."/>
            <person name="Toriumi M.J."/>
            <person name="Town C.D."/>
            <person name="Utterback T."/>
            <person name="Van Aken S."/>
            <person name="Vaysberg M."/>
            <person name="Vysotskaia V.S."/>
            <person name="Walker M."/>
            <person name="Wu D."/>
            <person name="Yu G."/>
            <person name="Fraser C.M."/>
            <person name="Venter J.C."/>
            <person name="Davis R.W."/>
        </authorList>
    </citation>
    <scope>NUCLEOTIDE SEQUENCE [LARGE SCALE GENOMIC DNA]</scope>
    <source>
        <strain>cv. Columbia</strain>
    </source>
</reference>
<reference key="2">
    <citation type="journal article" date="2017" name="Plant J.">
        <title>Araport11: a complete reannotation of the Arabidopsis thaliana reference genome.</title>
        <authorList>
            <person name="Cheng C.Y."/>
            <person name="Krishnakumar V."/>
            <person name="Chan A.P."/>
            <person name="Thibaud-Nissen F."/>
            <person name="Schobel S."/>
            <person name="Town C.D."/>
        </authorList>
    </citation>
    <scope>GENOME REANNOTATION</scope>
    <source>
        <strain>cv. Columbia</strain>
    </source>
</reference>
<reference key="3">
    <citation type="journal article" date="2003" name="Science">
        <title>Empirical analysis of transcriptional activity in the Arabidopsis genome.</title>
        <authorList>
            <person name="Yamada K."/>
            <person name="Lim J."/>
            <person name="Dale J.M."/>
            <person name="Chen H."/>
            <person name="Shinn P."/>
            <person name="Palm C.J."/>
            <person name="Southwick A.M."/>
            <person name="Wu H.C."/>
            <person name="Kim C.J."/>
            <person name="Nguyen M."/>
            <person name="Pham P.K."/>
            <person name="Cheuk R.F."/>
            <person name="Karlin-Newmann G."/>
            <person name="Liu S.X."/>
            <person name="Lam B."/>
            <person name="Sakano H."/>
            <person name="Wu T."/>
            <person name="Yu G."/>
            <person name="Miranda M."/>
            <person name="Quach H.L."/>
            <person name="Tripp M."/>
            <person name="Chang C.H."/>
            <person name="Lee J.M."/>
            <person name="Toriumi M.J."/>
            <person name="Chan M.M."/>
            <person name="Tang C.C."/>
            <person name="Onodera C.S."/>
            <person name="Deng J.M."/>
            <person name="Akiyama K."/>
            <person name="Ansari Y."/>
            <person name="Arakawa T."/>
            <person name="Banh J."/>
            <person name="Banno F."/>
            <person name="Bowser L."/>
            <person name="Brooks S.Y."/>
            <person name="Carninci P."/>
            <person name="Chao Q."/>
            <person name="Choy N."/>
            <person name="Enju A."/>
            <person name="Goldsmith A.D."/>
            <person name="Gurjal M."/>
            <person name="Hansen N.F."/>
            <person name="Hayashizaki Y."/>
            <person name="Johnson-Hopson C."/>
            <person name="Hsuan V.W."/>
            <person name="Iida K."/>
            <person name="Karnes M."/>
            <person name="Khan S."/>
            <person name="Koesema E."/>
            <person name="Ishida J."/>
            <person name="Jiang P.X."/>
            <person name="Jones T."/>
            <person name="Kawai J."/>
            <person name="Kamiya A."/>
            <person name="Meyers C."/>
            <person name="Nakajima M."/>
            <person name="Narusaka M."/>
            <person name="Seki M."/>
            <person name="Sakurai T."/>
            <person name="Satou M."/>
            <person name="Tamse R."/>
            <person name="Vaysberg M."/>
            <person name="Wallender E.K."/>
            <person name="Wong C."/>
            <person name="Yamamura Y."/>
            <person name="Yuan S."/>
            <person name="Shinozaki K."/>
            <person name="Davis R.W."/>
            <person name="Theologis A."/>
            <person name="Ecker J.R."/>
        </authorList>
    </citation>
    <scope>NUCLEOTIDE SEQUENCE [LARGE SCALE MRNA]</scope>
    <source>
        <strain>cv. Columbia</strain>
    </source>
</reference>
<reference key="4">
    <citation type="submission" date="2002-03" db="EMBL/GenBank/DDBJ databases">
        <title>Full-length cDNA from Arabidopsis thaliana.</title>
        <authorList>
            <person name="Brover V.V."/>
            <person name="Troukhan M.E."/>
            <person name="Alexandrov N.A."/>
            <person name="Lu Y.-P."/>
            <person name="Flavell R.B."/>
            <person name="Feldmann K.A."/>
        </authorList>
    </citation>
    <scope>NUCLEOTIDE SEQUENCE [LARGE SCALE MRNA]</scope>
</reference>
<reference key="5">
    <citation type="journal article" date="2009" name="Plant Physiol.">
        <title>Large-scale Arabidopsis phosphoproteome profiling reveals novel chloroplast kinase substrates and phosphorylation networks.</title>
        <authorList>
            <person name="Reiland S."/>
            <person name="Messerli G."/>
            <person name="Baerenfaller K."/>
            <person name="Gerrits B."/>
            <person name="Endler A."/>
            <person name="Grossmann J."/>
            <person name="Gruissem W."/>
            <person name="Baginsky S."/>
        </authorList>
    </citation>
    <scope>PHOSPHORYLATION [LARGE SCALE ANALYSIS] AT SER-98 AND SER-105</scope>
    <scope>IDENTIFICATION BY MASS SPECTROMETRY [LARGE SCALE ANALYSIS]</scope>
</reference>
<reference key="6">
    <citation type="journal article" date="2012" name="Biochem. J.">
        <title>Determination of primary sequence specificity of Arabidopsis MAPKs MPK3 and MPK6 leads to identification of new substrates.</title>
        <authorList>
            <person name="Soerensson C."/>
            <person name="Lenman M."/>
            <person name="Veide-Vilg J."/>
            <person name="Schopper S."/>
            <person name="Ljungdahl T."/>
            <person name="Groetli M."/>
            <person name="Tamas M.J."/>
            <person name="Peck S.C."/>
            <person name="Andreasson E."/>
        </authorList>
    </citation>
    <scope>FUNCTION</scope>
    <scope>PHOSPHORYLATION AT SER-105</scope>
    <scope>TISSUE SPECIFICITY</scope>
    <scope>MUTAGENESIS OF SER-105</scope>
</reference>
<dbReference type="EMBL" id="AC009322">
    <property type="protein sequence ID" value="AAD55474.1"/>
    <property type="molecule type" value="Genomic_DNA"/>
</dbReference>
<dbReference type="EMBL" id="CP002684">
    <property type="protein sequence ID" value="AEE36367.1"/>
    <property type="molecule type" value="Genomic_DNA"/>
</dbReference>
<dbReference type="EMBL" id="AY039872">
    <property type="protein sequence ID" value="AAK63976.1"/>
    <property type="molecule type" value="mRNA"/>
</dbReference>
<dbReference type="EMBL" id="AY077663">
    <property type="protein sequence ID" value="AAL76141.1"/>
    <property type="molecule type" value="mRNA"/>
</dbReference>
<dbReference type="EMBL" id="AY087473">
    <property type="protein sequence ID" value="AAM65017.1"/>
    <property type="molecule type" value="mRNA"/>
</dbReference>
<dbReference type="PIR" id="E96833">
    <property type="entry name" value="E96833"/>
</dbReference>
<dbReference type="RefSeq" id="NP_565233.1">
    <property type="nucleotide sequence ID" value="NM_106667.3"/>
</dbReference>
<dbReference type="FunCoup" id="Q9SSC1">
    <property type="interactions" value="83"/>
</dbReference>
<dbReference type="STRING" id="3702.Q9SSC1"/>
<dbReference type="iPTMnet" id="Q9SSC1"/>
<dbReference type="PaxDb" id="3702-AT1G80180.1"/>
<dbReference type="ProMEX" id="Q9SSC1"/>
<dbReference type="ProteomicsDB" id="232468"/>
<dbReference type="EnsemblPlants" id="AT1G80180.1">
    <property type="protein sequence ID" value="AT1G80180.1"/>
    <property type="gene ID" value="AT1G80180"/>
</dbReference>
<dbReference type="GeneID" id="844358"/>
<dbReference type="Gramene" id="AT1G80180.1">
    <property type="protein sequence ID" value="AT1G80180.1"/>
    <property type="gene ID" value="AT1G80180"/>
</dbReference>
<dbReference type="KEGG" id="ath:AT1G80180"/>
<dbReference type="Araport" id="AT1G80180"/>
<dbReference type="TAIR" id="AT1G80180"/>
<dbReference type="HOGENOM" id="CLU_123547_1_0_1"/>
<dbReference type="InParanoid" id="Q9SSC1"/>
<dbReference type="OMA" id="NEHKGET"/>
<dbReference type="OrthoDB" id="689003at2759"/>
<dbReference type="PhylomeDB" id="Q9SSC1"/>
<dbReference type="PRO" id="PR:Q9SSC1"/>
<dbReference type="Proteomes" id="UP000006548">
    <property type="component" value="Chromosome 1"/>
</dbReference>
<dbReference type="ExpressionAtlas" id="Q9SSC1">
    <property type="expression patterns" value="baseline and differential"/>
</dbReference>
<dbReference type="GO" id="GO:0005634">
    <property type="term" value="C:nucleus"/>
    <property type="evidence" value="ECO:0000314"/>
    <property type="project" value="TAIR"/>
</dbReference>
<dbReference type="GO" id="GO:0005886">
    <property type="term" value="C:plasma membrane"/>
    <property type="evidence" value="ECO:0000314"/>
    <property type="project" value="TAIR"/>
</dbReference>
<dbReference type="GO" id="GO:0010375">
    <property type="term" value="P:stomatal complex patterning"/>
    <property type="evidence" value="ECO:0000315"/>
    <property type="project" value="TAIR"/>
</dbReference>
<dbReference type="InterPro" id="IPR031421">
    <property type="entry name" value="DUF4666"/>
</dbReference>
<dbReference type="PANTHER" id="PTHR33730:SF30">
    <property type="entry name" value="MAPK KINASE SUBSTRATE PROTEIN"/>
    <property type="match status" value="1"/>
</dbReference>
<dbReference type="PANTHER" id="PTHR33730">
    <property type="entry name" value="OS05G0542732 PROTEIN-RELATED"/>
    <property type="match status" value="1"/>
</dbReference>
<dbReference type="Pfam" id="PF15697">
    <property type="entry name" value="DUF4666"/>
    <property type="match status" value="1"/>
</dbReference>
<accession>Q9SSC1</accession>
<gene>
    <name evidence="4" type="ordered locus">At1g80180</name>
    <name evidence="5" type="ORF">F18B13.26</name>
</gene>
<organism>
    <name type="scientific">Arabidopsis thaliana</name>
    <name type="common">Mouse-ear cress</name>
    <dbReference type="NCBI Taxonomy" id="3702"/>
    <lineage>
        <taxon>Eukaryota</taxon>
        <taxon>Viridiplantae</taxon>
        <taxon>Streptophyta</taxon>
        <taxon>Embryophyta</taxon>
        <taxon>Tracheophyta</taxon>
        <taxon>Spermatophyta</taxon>
        <taxon>Magnoliopsida</taxon>
        <taxon>eudicotyledons</taxon>
        <taxon>Gunneridae</taxon>
        <taxon>Pentapetalae</taxon>
        <taxon>rosids</taxon>
        <taxon>malvids</taxon>
        <taxon>Brassicales</taxon>
        <taxon>Brassicaceae</taxon>
        <taxon>Camelineae</taxon>
        <taxon>Arabidopsis</taxon>
    </lineage>
</organism>
<feature type="chain" id="PRO_0000439062" description="MAPK kinase substrate protein At1g80180">
    <location>
        <begin position="1"/>
        <end position="138"/>
    </location>
</feature>
<feature type="region of interest" description="Disordered" evidence="1">
    <location>
        <begin position="52"/>
        <end position="138"/>
    </location>
</feature>
<feature type="compositionally biased region" description="Basic and acidic residues" evidence="1">
    <location>
        <begin position="69"/>
        <end position="81"/>
    </location>
</feature>
<feature type="compositionally biased region" description="Basic residues" evidence="1">
    <location>
        <begin position="121"/>
        <end position="138"/>
    </location>
</feature>
<feature type="modified residue" description="Phosphoserine" evidence="6">
    <location>
        <position position="98"/>
    </location>
</feature>
<feature type="modified residue" description="Phosphoserine; by MAPK6" evidence="2 6">
    <location>
        <position position="105"/>
    </location>
</feature>
<feature type="mutagenesis site" description="Loss of phosphorylation by MAPK6." evidence="2">
    <original>S</original>
    <variation>A</variation>
    <location>
        <position position="105"/>
    </location>
</feature>
<feature type="mutagenesis site" description="Clustered stomata and high stomatal index in cotyledons." evidence="2">
    <original>S</original>
    <variation>D</variation>
    <location>
        <position position="105"/>
    </location>
</feature>
<evidence type="ECO:0000256" key="1">
    <source>
        <dbReference type="SAM" id="MobiDB-lite"/>
    </source>
</evidence>
<evidence type="ECO:0000269" key="2">
    <source>
    </source>
</evidence>
<evidence type="ECO:0000305" key="3">
    <source>
    </source>
</evidence>
<evidence type="ECO:0000312" key="4">
    <source>
        <dbReference type="Araport" id="AT1G80180"/>
    </source>
</evidence>
<evidence type="ECO:0000312" key="5">
    <source>
        <dbReference type="EMBL" id="AAD55474.1"/>
    </source>
</evidence>
<evidence type="ECO:0007744" key="6">
    <source>
    </source>
</evidence>
<name>Y1801_ARATH</name>
<keyword id="KW-0217">Developmental protein</keyword>
<keyword id="KW-0597">Phosphoprotein</keyword>
<keyword id="KW-1185">Reference proteome</keyword>